<protein>
    <recommendedName>
        <fullName>GTPase HRas</fullName>
        <ecNumber evidence="2">3.6.5.2</ecNumber>
    </recommendedName>
    <alternativeName>
        <fullName>H-Ras-1</fullName>
    </alternativeName>
    <alternativeName>
        <fullName>Transforming protein p21</fullName>
    </alternativeName>
    <alternativeName>
        <fullName>c-H-ras</fullName>
    </alternativeName>
    <alternativeName>
        <fullName>p21ras</fullName>
    </alternativeName>
    <component>
        <recommendedName>
            <fullName>GTPase HRas, N-terminally processed</fullName>
        </recommendedName>
    </component>
</protein>
<accession>Q61411</accession>
<accession>F7BIB2</accession>
<accession>Q6P716</accession>
<accession>Q80WD2</accession>
<accession>Q811B9</accession>
<sequence>MTEYKLVVVGAGGVGKSALTIQLIQNHFVDEYDPTIEDSYRKQVVIDGETCLLDILDTAGQEEYSAMRDQYMRTGEGFLCVFAINNTKSFEDIHQYREQIKRVKDSDDVPMVLVGNKCDLAARTVESRQAQDLARSYGIPYIETSAKTRQGVEDAFYTLVREIRQHKLRKLNPPDESGPGCMSCKCVLS</sequence>
<gene>
    <name type="primary">Hras</name>
    <name type="synonym">Hras1</name>
</gene>
<name>RASH_MOUSE</name>
<comment type="function">
    <text>Ras proteins bind GDP/GTP and possess intrinsic GTPase activity.</text>
</comment>
<comment type="catalytic activity">
    <reaction evidence="2">
        <text>GTP + H2O = GDP + phosphate + H(+)</text>
        <dbReference type="Rhea" id="RHEA:19669"/>
        <dbReference type="ChEBI" id="CHEBI:15377"/>
        <dbReference type="ChEBI" id="CHEBI:15378"/>
        <dbReference type="ChEBI" id="CHEBI:37565"/>
        <dbReference type="ChEBI" id="CHEBI:43474"/>
        <dbReference type="ChEBI" id="CHEBI:58189"/>
        <dbReference type="EC" id="3.6.5.2"/>
    </reaction>
</comment>
<comment type="activity regulation">
    <text>Alternates between an inactive form bound to GDP and an active form bound to GTP. Activated by a guanine nucleotide-exchange factor (GEF) and inactivated by a GTPase-activating protein (GAP).</text>
</comment>
<comment type="subunit">
    <text evidence="2 3 4 5 6 7">In its GTP-bound form interacts with PLCE1 (By similarity). Interacts with TBC1D10C (By similarity). Interacts with RGL3 (PubMed:10869344). Interacts with HSPD1 (PubMed:1347942). Found in a complex with at least BRAF, HRAS, MAP2K1, MAPK3 and RGS14 (By similarity). Interacts (active GTP-bound form) with RGS14 (via RBD 1 domain) (By similarity). Forms a signaling complex with RASGRP1 and DGKZ (By similarity). Interacts with RASSF5 (By similarity). Interacts with PDE6D (By similarity). Interacts with IKZF3 (By similarity). Interacts with RACK1 (By similarity). Interacts with PIK3CG; the interaction is required for membrane recruitment and beta-gamma G protein dimer-dependent activation of the PI3K gamma complex PIK3CG:PIK3R6 (PubMed:19906996). Interacts with RAPGEF2 (By similarity). Interacts (active GTP-bound form) with both SHOC2 and PP1c (all isoforms) to form a tertiary complex; SHOC2 and PP1c preferably bind M-Ras/MRAS, but they also bind K-Ras/KRAS, N-Ras/NRAS and H-Ras/HRAS (By similarity). Interacts (in GTP-bound form) with Oog1 (PubMed:16580637). Interacts (GTP-bound form) with MAPKAP1/SIN1; inhibiting H-Ras/HRAS activity (By similarity).</text>
</comment>
<comment type="interaction">
    <interactant intactId="EBI-400273">
        <id>Q61411</id>
    </interactant>
    <interactant intactId="EBI-960530">
        <id>Q5EBH1</id>
        <label>Rassf5</label>
    </interactant>
    <organismsDiffer>false</organismsDiffer>
    <experiments>2</experiments>
</comment>
<comment type="subcellular location">
    <subcellularLocation>
        <location evidence="3">Cell membrane</location>
    </subcellularLocation>
    <subcellularLocation>
        <location evidence="1">Cell membrane</location>
        <topology evidence="1">Lipid-anchor</topology>
        <orientation evidence="1">Cytoplasmic side</orientation>
    </subcellularLocation>
    <subcellularLocation>
        <location evidence="1">Golgi apparatus</location>
    </subcellularLocation>
    <subcellularLocation>
        <location evidence="1">Golgi apparatus membrane</location>
        <topology evidence="1">Lipid-anchor</topology>
    </subcellularLocation>
    <text evidence="1">Shuttles between the plasma membrane and the Golgi apparatus. The active GTP-bound form is localized most strongly to membranes than the inactive GDP-bound form (By similarity).</text>
</comment>
<comment type="alternative products">
    <event type="alternative splicing"/>
    <isoform>
        <id>Q61411-1</id>
        <name>1</name>
        <name>p21</name>
        <name>H-Ras4A</name>
        <sequence type="displayed"/>
    </isoform>
    <isoform>
        <id>Q61411-2</id>
        <name>2</name>
        <name>p19</name>
        <name>H-RasIDX</name>
        <sequence type="described" ref="VSP_041598"/>
    </isoform>
</comment>
<comment type="PTM">
    <text evidence="2">Palmitoylated by the ZDHHC9-GOLGA7 complex. A continuous cycle of de- and re-palmitoylation regulates rapid exchange between plasma membrane and Golgi.</text>
</comment>
<comment type="PTM">
    <text evidence="2">S-nitrosylated; critical for redox regulation. Important for stimulating guanine nucleotide exchange. No structural perturbation on nitrosylation.</text>
</comment>
<comment type="PTM">
    <text evidence="2">The covalent modification of cysteine by 15-deoxy-Delta12,14-prostaglandin-J2 is autocatalytic and reversible. It may occur as an alternative to other cysteine modifications, such as S-nitrosylation and S-palmitoylation.</text>
</comment>
<comment type="PTM">
    <text evidence="1">Acetylation at Lys-104 prevents interaction with guanine nucleotide exchange factors (GEFs).</text>
</comment>
<comment type="PTM">
    <text evidence="2">Ubiquitinated by the BCR(LZTR1) E3 ubiquitin ligase complex at Lys-170 in a non-degradative manner, leading to inhibit Ras signaling by decreasing Ras association with membranes.</text>
</comment>
<comment type="similarity">
    <text evidence="10">Belongs to the small GTPase superfamily. Ras family.</text>
</comment>
<comment type="sequence caution" evidence="10">
    <conflict type="erroneous initiation">
        <sequence resource="EMBL-CDS" id="AAH61885"/>
    </conflict>
    <text>Extended N-terminus.</text>
</comment>
<reference key="1">
    <citation type="journal article" date="1996" name="Acta Biochim. Pol.">
        <title>Nucleotide sequence of c-H-ras-1 gene from B6C3F1 mice.</title>
        <authorList>
            <person name="Przybojewska B."/>
            <person name="Plucienniczak G."/>
        </authorList>
    </citation>
    <scope>NUCLEOTIDE SEQUENCE [GENOMIC DNA]</scope>
    <source>
        <strain>C57BL/6 X C3H</strain>
        <tissue>Liver</tissue>
    </source>
</reference>
<reference key="2">
    <citation type="submission" date="2003-08" db="EMBL/GenBank/DDBJ databases">
        <authorList>
            <person name="Lin L."/>
            <person name="Fu D."/>
        </authorList>
    </citation>
    <scope>NUCLEOTIDE SEQUENCE [MRNA] (ISOFORM 1)</scope>
    <source>
        <strain>BALB/cJ</strain>
        <tissue>Keratinocyte</tissue>
    </source>
</reference>
<reference key="3">
    <citation type="journal article" date="2009" name="PLoS Biol.">
        <title>Lineage-specific biology revealed by a finished genome assembly of the mouse.</title>
        <authorList>
            <person name="Church D.M."/>
            <person name="Goodstadt L."/>
            <person name="Hillier L.W."/>
            <person name="Zody M.C."/>
            <person name="Goldstein S."/>
            <person name="She X."/>
            <person name="Bult C.J."/>
            <person name="Agarwala R."/>
            <person name="Cherry J.L."/>
            <person name="DiCuccio M."/>
            <person name="Hlavina W."/>
            <person name="Kapustin Y."/>
            <person name="Meric P."/>
            <person name="Maglott D."/>
            <person name="Birtle Z."/>
            <person name="Marques A.C."/>
            <person name="Graves T."/>
            <person name="Zhou S."/>
            <person name="Teague B."/>
            <person name="Potamousis K."/>
            <person name="Churas C."/>
            <person name="Place M."/>
            <person name="Herschleb J."/>
            <person name="Runnheim R."/>
            <person name="Forrest D."/>
            <person name="Amos-Landgraf J."/>
            <person name="Schwartz D.C."/>
            <person name="Cheng Z."/>
            <person name="Lindblad-Toh K."/>
            <person name="Eichler E.E."/>
            <person name="Ponting C.P."/>
        </authorList>
    </citation>
    <scope>NUCLEOTIDE SEQUENCE [LARGE SCALE GENOMIC DNA]</scope>
</reference>
<reference key="4">
    <citation type="submission" date="2005-07" db="EMBL/GenBank/DDBJ databases">
        <authorList>
            <person name="Mural R.J."/>
            <person name="Adams M.D."/>
            <person name="Myers E.W."/>
            <person name="Smith H.O."/>
            <person name="Venter J.C."/>
        </authorList>
    </citation>
    <scope>NUCLEOTIDE SEQUENCE [LARGE SCALE GENOMIC DNA]</scope>
</reference>
<reference key="5">
    <citation type="journal article" date="2004" name="Genome Res.">
        <title>The status, quality, and expansion of the NIH full-length cDNA project: the Mammalian Gene Collection (MGC).</title>
        <authorList>
            <consortium name="The MGC Project Team"/>
        </authorList>
    </citation>
    <scope>NUCLEOTIDE SEQUENCE [LARGE SCALE MRNA] (ISOFORM 1)</scope>
    <source>
        <tissue>Olfactory epithelium</tissue>
    </source>
</reference>
<reference key="6">
    <citation type="journal article" date="1994" name="Mutat. Res.">
        <title>Spontaneous mutation at codon 61 of the Ha-ras gene in the nascent liver of B6C3F1, C3H/He and C57BL/6 mice.</title>
        <authorList>
            <person name="Moulds B.A."/>
            <person name="Goodman J.I."/>
        </authorList>
    </citation>
    <scope>NUCLEOTIDE SEQUENCE [GENOMIC DNA] OF 59-75</scope>
    <scope>MUTAGENESIS OF GLN-61</scope>
</reference>
<reference key="7">
    <citation type="submission" date="2007-04" db="UniProtKB">
        <authorList>
            <person name="Lubec G."/>
            <person name="Kang S.U."/>
        </authorList>
    </citation>
    <scope>PROTEIN SEQUENCE OF 136-147</scope>
    <scope>IDENTIFICATION BY MASS SPECTROMETRY</scope>
    <source>
        <strain>C57BL/6J</strain>
        <tissue>Brain</tissue>
    </source>
</reference>
<reference key="8">
    <citation type="journal article" date="2003" name="Cancer Res.">
        <title>Alternative splicing of the human proto-oncogene c-H-ras renders a new Ras family protein that trafficks to cytoplasm and nucleus.</title>
        <authorList>
            <person name="Guil S."/>
            <person name="de La Iglesia N."/>
            <person name="Fernandez-Larrea J."/>
            <person name="Cifuentes D."/>
            <person name="Ferrer J.C."/>
            <person name="Guinovart J.J."/>
            <person name="Bach-Elias M."/>
        </authorList>
    </citation>
    <scope>NUCLEOTIDE SEQUENCE [MRNA] OF 151-189 (ISOFORM 2)</scope>
    <scope>ALTERNATIVE SPLICING</scope>
    <source>
        <strain>NIH/3T3</strain>
    </source>
</reference>
<reference key="9">
    <citation type="journal article" date="1992" name="Proc. Natl. Acad. Sci. U.S.A.">
        <title>An interaction between p21ras and heat shock protein hsp60, a chaperonin.</title>
        <authorList>
            <person name="Ikawa S."/>
            <person name="Weinberg R.A."/>
        </authorList>
    </citation>
    <scope>INTERACTION WITH HSPD1</scope>
</reference>
<reference key="10">
    <citation type="journal article" date="2000" name="J. Biol. Chem.">
        <title>A novel RalGEF-like protein, RGL3, as a candidate effector for rit and Ras.</title>
        <authorList>
            <person name="Shao H."/>
            <person name="Andres D.A."/>
        </authorList>
    </citation>
    <scope>INTERACTION WITH RGL3</scope>
</reference>
<reference key="11">
    <citation type="journal article" date="2006" name="Biochem. Biophys. Res. Commun.">
        <title>Oog1, an oocyte-specific protein, interacts with Ras and Ras-signaling proteins during early embryogenesis.</title>
        <authorList>
            <person name="Tsukamoto S."/>
            <person name="Ihara R."/>
            <person name="Aizawa A."/>
            <person name="Kishida S."/>
            <person name="Kikuchi A."/>
            <person name="Imai H."/>
            <person name="Minami N."/>
        </authorList>
    </citation>
    <scope>INTERACTION WITH OOG1</scope>
</reference>
<reference key="12">
    <citation type="journal article" date="2009" name="Proc. Natl. Acad. Sci. U.S.A.">
        <title>Ras is an indispensable coregulator of the class IB phosphoinositide 3-kinase p87/p110gamma.</title>
        <authorList>
            <person name="Kurig B."/>
            <person name="Shymanets A."/>
            <person name="Bohnacker T."/>
            <person name="Prajwal X."/>
            <person name="Brock C."/>
            <person name="Ahmadian M.R."/>
            <person name="Schaefer M."/>
            <person name="Gohla A."/>
            <person name="Harteneck C."/>
            <person name="Wymann M.P."/>
            <person name="Jeanclos E."/>
            <person name="Nurnberg B."/>
        </authorList>
    </citation>
    <scope>INTERACTION WITH PIK3CG</scope>
</reference>
<reference key="13">
    <citation type="journal article" date="2010" name="Cell">
        <title>A tissue-specific atlas of mouse protein phosphorylation and expression.</title>
        <authorList>
            <person name="Huttlin E.L."/>
            <person name="Jedrychowski M.P."/>
            <person name="Elias J.E."/>
            <person name="Goswami T."/>
            <person name="Rad R."/>
            <person name="Beausoleil S.A."/>
            <person name="Villen J."/>
            <person name="Haas W."/>
            <person name="Sowa M.E."/>
            <person name="Gygi S.P."/>
        </authorList>
    </citation>
    <scope>IDENTIFICATION BY MASS SPECTROMETRY [LARGE SCALE ANALYSIS]</scope>
    <source>
        <tissue>Brain</tissue>
        <tissue>Brown adipose tissue</tissue>
        <tissue>Liver</tissue>
        <tissue>Testis</tissue>
    </source>
</reference>
<evidence type="ECO:0000250" key="1"/>
<evidence type="ECO:0000250" key="2">
    <source>
        <dbReference type="UniProtKB" id="P01112"/>
    </source>
</evidence>
<evidence type="ECO:0000250" key="3">
    <source>
        <dbReference type="UniProtKB" id="P20171"/>
    </source>
</evidence>
<evidence type="ECO:0000269" key="4">
    <source>
    </source>
</evidence>
<evidence type="ECO:0000269" key="5">
    <source>
    </source>
</evidence>
<evidence type="ECO:0000269" key="6">
    <source>
    </source>
</evidence>
<evidence type="ECO:0000269" key="7">
    <source>
    </source>
</evidence>
<evidence type="ECO:0000269" key="8">
    <source>
    </source>
</evidence>
<evidence type="ECO:0000303" key="9">
    <source>
    </source>
</evidence>
<evidence type="ECO:0000305" key="10"/>
<evidence type="ECO:0007829" key="11">
    <source>
        <dbReference type="PDB" id="6KYH"/>
    </source>
</evidence>
<proteinExistence type="evidence at protein level"/>
<dbReference type="EC" id="3.6.5.2" evidence="2"/>
<dbReference type="EMBL" id="Z50013">
    <property type="protein sequence ID" value="CAA90306.1"/>
    <property type="molecule type" value="Genomic_DNA"/>
</dbReference>
<dbReference type="EMBL" id="AY373386">
    <property type="protein sequence ID" value="AAQ81319.1"/>
    <property type="molecule type" value="mRNA"/>
</dbReference>
<dbReference type="EMBL" id="AC108908">
    <property type="status" value="NOT_ANNOTATED_CDS"/>
    <property type="molecule type" value="Genomic_DNA"/>
</dbReference>
<dbReference type="EMBL" id="CH466531">
    <property type="protein sequence ID" value="EDL18008.1"/>
    <property type="molecule type" value="Genomic_DNA"/>
</dbReference>
<dbReference type="EMBL" id="CH466531">
    <property type="protein sequence ID" value="EDL18009.1"/>
    <property type="molecule type" value="Genomic_DNA"/>
</dbReference>
<dbReference type="EMBL" id="BC061885">
    <property type="protein sequence ID" value="AAH61885.1"/>
    <property type="status" value="ALT_INIT"/>
    <property type="molecule type" value="mRNA"/>
</dbReference>
<dbReference type="EMBL" id="S74119">
    <property type="protein sequence ID" value="AAP21090.1"/>
    <property type="molecule type" value="Genomic_DNA"/>
</dbReference>
<dbReference type="EMBL" id="AJ437023">
    <property type="protein sequence ID" value="CAD24593.1"/>
    <property type="molecule type" value="mRNA"/>
</dbReference>
<dbReference type="CCDS" id="CCDS22003.1">
    <molecule id="Q61411-1"/>
</dbReference>
<dbReference type="CCDS" id="CCDS52439.1">
    <molecule id="Q61411-2"/>
</dbReference>
<dbReference type="PIR" id="S57718">
    <property type="entry name" value="S57718"/>
</dbReference>
<dbReference type="RefSeq" id="NP_001123915.1">
    <molecule id="Q61411-1"/>
    <property type="nucleotide sequence ID" value="NM_001130443.2"/>
</dbReference>
<dbReference type="RefSeq" id="NP_001123916.1">
    <molecule id="Q61411-2"/>
    <property type="nucleotide sequence ID" value="NM_001130444.2"/>
</dbReference>
<dbReference type="RefSeq" id="NP_001399407.1">
    <molecule id="Q61411-1"/>
    <property type="nucleotide sequence ID" value="NM_001412478.1"/>
</dbReference>
<dbReference type="RefSeq" id="NP_001399408.1">
    <molecule id="Q61411-1"/>
    <property type="nucleotide sequence ID" value="NM_001412479.1"/>
</dbReference>
<dbReference type="RefSeq" id="NP_001399409.1">
    <molecule id="Q61411-1"/>
    <property type="nucleotide sequence ID" value="NM_001412480.1"/>
</dbReference>
<dbReference type="RefSeq" id="NP_001399410.1">
    <molecule id="Q61411-1"/>
    <property type="nucleotide sequence ID" value="NM_001412481.1"/>
</dbReference>
<dbReference type="RefSeq" id="NP_032310.2">
    <molecule id="Q61411-1"/>
    <property type="nucleotide sequence ID" value="NM_008284.3"/>
</dbReference>
<dbReference type="RefSeq" id="XP_006536222.2">
    <property type="nucleotide sequence ID" value="XM_006536159.2"/>
</dbReference>
<dbReference type="PDB" id="6KYH">
    <property type="method" value="X-ray"/>
    <property type="resolution" value="3.30 A"/>
    <property type="chains" value="E/F/G/H=1-167"/>
</dbReference>
<dbReference type="PDBsum" id="6KYH"/>
<dbReference type="SMR" id="Q61411"/>
<dbReference type="BioGRID" id="200416">
    <property type="interactions" value="19"/>
</dbReference>
<dbReference type="ComplexPortal" id="CPX-413">
    <property type="entry name" value="GTPase Hras - Son of sevenless homolog 1 complex"/>
</dbReference>
<dbReference type="CORUM" id="Q61411"/>
<dbReference type="DIP" id="DIP-29361N"/>
<dbReference type="FunCoup" id="Q61411">
    <property type="interactions" value="2526"/>
</dbReference>
<dbReference type="IntAct" id="Q61411">
    <property type="interactions" value="8"/>
</dbReference>
<dbReference type="MINT" id="Q61411"/>
<dbReference type="STRING" id="10090.ENSMUSP00000026572"/>
<dbReference type="GlyGen" id="Q61411">
    <property type="glycosylation" value="3 sites"/>
</dbReference>
<dbReference type="iPTMnet" id="Q61411"/>
<dbReference type="PhosphoSitePlus" id="Q61411"/>
<dbReference type="SwissPalm" id="Q61411"/>
<dbReference type="jPOST" id="Q61411"/>
<dbReference type="PaxDb" id="10090-ENSMUSP00000026572"/>
<dbReference type="PeptideAtlas" id="Q61411"/>
<dbReference type="ProteomicsDB" id="255107">
    <molecule id="Q61411-1"/>
</dbReference>
<dbReference type="ProteomicsDB" id="255108">
    <molecule id="Q61411-2"/>
</dbReference>
<dbReference type="Pumba" id="Q61411"/>
<dbReference type="ABCD" id="Q61411">
    <property type="antibodies" value="1 sequenced antibody"/>
</dbReference>
<dbReference type="Antibodypedia" id="22506">
    <property type="antibodies" value="820 antibodies from 38 providers"/>
</dbReference>
<dbReference type="DNASU" id="15461"/>
<dbReference type="Ensembl" id="ENSMUST00000026572.11">
    <molecule id="Q61411-1"/>
    <property type="protein sequence ID" value="ENSMUSP00000026572.5"/>
    <property type="gene ID" value="ENSMUSG00000025499.19"/>
</dbReference>
<dbReference type="Ensembl" id="ENSMUST00000097957.11">
    <molecule id="Q61411-1"/>
    <property type="protein sequence ID" value="ENSMUSP00000095570.5"/>
    <property type="gene ID" value="ENSMUSG00000025499.19"/>
</dbReference>
<dbReference type="Ensembl" id="ENSMUST00000124314.3">
    <molecule id="Q61411-2"/>
    <property type="protein sequence ID" value="ENSMUSP00000147731.2"/>
    <property type="gene ID" value="ENSMUSG00000025499.19"/>
</dbReference>
<dbReference type="Ensembl" id="ENSMUST00000168550.8">
    <molecule id="Q61411-2"/>
    <property type="protein sequence ID" value="ENSMUSP00000132110.2"/>
    <property type="gene ID" value="ENSMUSG00000025499.19"/>
</dbReference>
<dbReference type="GeneID" id="15461"/>
<dbReference type="KEGG" id="mmu:15461"/>
<dbReference type="UCSC" id="uc009kju.2">
    <molecule id="Q61411-1"/>
    <property type="organism name" value="mouse"/>
</dbReference>
<dbReference type="UCSC" id="uc009kjv.2">
    <molecule id="Q61411-2"/>
    <property type="organism name" value="mouse"/>
</dbReference>
<dbReference type="AGR" id="MGI:96224"/>
<dbReference type="CTD" id="3265"/>
<dbReference type="MGI" id="MGI:96224">
    <property type="gene designation" value="Hras"/>
</dbReference>
<dbReference type="VEuPathDB" id="HostDB:ENSMUSG00000025499"/>
<dbReference type="eggNOG" id="KOG0395">
    <property type="taxonomic scope" value="Eukaryota"/>
</dbReference>
<dbReference type="GeneTree" id="ENSGT00940000155653"/>
<dbReference type="HOGENOM" id="CLU_041217_9_8_1"/>
<dbReference type="InParanoid" id="Q61411"/>
<dbReference type="OMA" id="HYREQIR"/>
<dbReference type="OrthoDB" id="5976022at2759"/>
<dbReference type="PhylomeDB" id="Q61411"/>
<dbReference type="TreeFam" id="TF312796"/>
<dbReference type="Reactome" id="R-MMU-1169092">
    <property type="pathway name" value="Activation of RAS in B cells"/>
</dbReference>
<dbReference type="Reactome" id="R-MMU-1250347">
    <property type="pathway name" value="SHC1 events in ERBB4 signaling"/>
</dbReference>
<dbReference type="Reactome" id="R-MMU-1433557">
    <property type="pathway name" value="Signaling by SCF-KIT"/>
</dbReference>
<dbReference type="Reactome" id="R-MMU-171007">
    <property type="pathway name" value="p38MAPK events"/>
</dbReference>
<dbReference type="Reactome" id="R-MMU-179812">
    <property type="pathway name" value="GRB2 events in EGFR signaling"/>
</dbReference>
<dbReference type="Reactome" id="R-MMU-180336">
    <property type="pathway name" value="SHC1 events in EGFR signaling"/>
</dbReference>
<dbReference type="Reactome" id="R-MMU-186763">
    <property type="pathway name" value="Downstream signal transduction"/>
</dbReference>
<dbReference type="Reactome" id="R-MMU-1963640">
    <property type="pathway name" value="GRB2 events in ERBB2 signaling"/>
</dbReference>
<dbReference type="Reactome" id="R-MMU-210993">
    <property type="pathway name" value="Tie2 Signaling"/>
</dbReference>
<dbReference type="Reactome" id="R-MMU-2179392">
    <property type="pathway name" value="EGFR Transactivation by Gastrin"/>
</dbReference>
<dbReference type="Reactome" id="R-MMU-2424491">
    <property type="pathway name" value="DAP12 signaling"/>
</dbReference>
<dbReference type="Reactome" id="R-MMU-2871796">
    <property type="pathway name" value="FCERI mediated MAPK activation"/>
</dbReference>
<dbReference type="Reactome" id="R-MMU-375165">
    <property type="pathway name" value="NCAM signaling for neurite out-growth"/>
</dbReference>
<dbReference type="Reactome" id="R-MMU-3928662">
    <property type="pathway name" value="EPHB-mediated forward signaling"/>
</dbReference>
<dbReference type="Reactome" id="R-MMU-5218921">
    <property type="pathway name" value="VEGFR2 mediated cell proliferation"/>
</dbReference>
<dbReference type="Reactome" id="R-MMU-5621575">
    <property type="pathway name" value="CD209 (DC-SIGN) signaling"/>
</dbReference>
<dbReference type="Reactome" id="R-MMU-5654688">
    <property type="pathway name" value="SHC-mediated cascade:FGFR1"/>
</dbReference>
<dbReference type="Reactome" id="R-MMU-5654693">
    <property type="pathway name" value="FRS-mediated FGFR1 signaling"/>
</dbReference>
<dbReference type="Reactome" id="R-MMU-5654699">
    <property type="pathway name" value="SHC-mediated cascade:FGFR2"/>
</dbReference>
<dbReference type="Reactome" id="R-MMU-5654700">
    <property type="pathway name" value="FRS-mediated FGFR2 signaling"/>
</dbReference>
<dbReference type="Reactome" id="R-MMU-5654704">
    <property type="pathway name" value="SHC-mediated cascade:FGFR3"/>
</dbReference>
<dbReference type="Reactome" id="R-MMU-5654706">
    <property type="pathway name" value="FRS-mediated FGFR3 signaling"/>
</dbReference>
<dbReference type="Reactome" id="R-MMU-5654712">
    <property type="pathway name" value="FRS-mediated FGFR4 signaling"/>
</dbReference>
<dbReference type="Reactome" id="R-MMU-5654719">
    <property type="pathway name" value="SHC-mediated cascade:FGFR4"/>
</dbReference>
<dbReference type="Reactome" id="R-MMU-5658442">
    <property type="pathway name" value="Regulation of RAS by GAPs"/>
</dbReference>
<dbReference type="Reactome" id="R-MMU-5673000">
    <property type="pathway name" value="RAF activation"/>
</dbReference>
<dbReference type="Reactome" id="R-MMU-5673001">
    <property type="pathway name" value="RAF/MAP kinase cascade"/>
</dbReference>
<dbReference type="Reactome" id="R-MMU-5674135">
    <property type="pathway name" value="MAP2K and MAPK activation"/>
</dbReference>
<dbReference type="Reactome" id="R-MMU-5675221">
    <property type="pathway name" value="Negative regulation of MAPK pathway"/>
</dbReference>
<dbReference type="Reactome" id="R-MMU-8849471">
    <property type="pathway name" value="PTK6 Regulates RHO GTPases, RAS GTPase and MAP kinases"/>
</dbReference>
<dbReference type="Reactome" id="R-MMU-8851805">
    <property type="pathway name" value="MET activates RAS signaling"/>
</dbReference>
<dbReference type="Reactome" id="R-MMU-9607240">
    <property type="pathway name" value="FLT3 Signaling"/>
</dbReference>
<dbReference type="Reactome" id="R-MMU-9634635">
    <property type="pathway name" value="Estrogen-stimulated signaling through PRKCZ"/>
</dbReference>
<dbReference type="Reactome" id="R-MMU-9648002">
    <property type="pathway name" value="RAS processing"/>
</dbReference>
<dbReference type="BioGRID-ORCS" id="15461">
    <property type="hits" value="1 hit in 77 CRISPR screens"/>
</dbReference>
<dbReference type="CD-CODE" id="CE726F99">
    <property type="entry name" value="Postsynaptic density"/>
</dbReference>
<dbReference type="ChiTaRS" id="Hras">
    <property type="organism name" value="mouse"/>
</dbReference>
<dbReference type="PRO" id="PR:Q61411"/>
<dbReference type="Proteomes" id="UP000000589">
    <property type="component" value="Chromosome 7"/>
</dbReference>
<dbReference type="RNAct" id="Q61411">
    <property type="molecule type" value="protein"/>
</dbReference>
<dbReference type="Bgee" id="ENSMUSG00000025499">
    <property type="expression patterns" value="Expressed in dentate gyrus of hippocampal formation granule cell and 274 other cell types or tissues"/>
</dbReference>
<dbReference type="ExpressionAtlas" id="Q61411">
    <property type="expression patterns" value="baseline and differential"/>
</dbReference>
<dbReference type="GO" id="GO:0036064">
    <property type="term" value="C:ciliary basal body"/>
    <property type="evidence" value="ECO:0007669"/>
    <property type="project" value="Ensembl"/>
</dbReference>
<dbReference type="GO" id="GO:0005829">
    <property type="term" value="C:cytosol"/>
    <property type="evidence" value="ECO:0007669"/>
    <property type="project" value="Ensembl"/>
</dbReference>
<dbReference type="GO" id="GO:0098978">
    <property type="term" value="C:glutamatergic synapse"/>
    <property type="evidence" value="ECO:0007669"/>
    <property type="project" value="Ensembl"/>
</dbReference>
<dbReference type="GO" id="GO:0005794">
    <property type="term" value="C:Golgi apparatus"/>
    <property type="evidence" value="ECO:0000250"/>
    <property type="project" value="UniProtKB"/>
</dbReference>
<dbReference type="GO" id="GO:0000139">
    <property type="term" value="C:Golgi membrane"/>
    <property type="evidence" value="ECO:0007669"/>
    <property type="project" value="UniProtKB-SubCell"/>
</dbReference>
<dbReference type="GO" id="GO:1905360">
    <property type="term" value="C:GTPase complex"/>
    <property type="evidence" value="ECO:0000266"/>
    <property type="project" value="ComplexPortal"/>
</dbReference>
<dbReference type="GO" id="GO:0005654">
    <property type="term" value="C:nucleoplasm"/>
    <property type="evidence" value="ECO:0007669"/>
    <property type="project" value="Ensembl"/>
</dbReference>
<dbReference type="GO" id="GO:0005886">
    <property type="term" value="C:plasma membrane"/>
    <property type="evidence" value="ECO:0000250"/>
    <property type="project" value="UniProtKB"/>
</dbReference>
<dbReference type="GO" id="GO:0003925">
    <property type="term" value="F:G protein activity"/>
    <property type="evidence" value="ECO:0007669"/>
    <property type="project" value="UniProtKB-EC"/>
</dbReference>
<dbReference type="GO" id="GO:0019003">
    <property type="term" value="F:GDP binding"/>
    <property type="evidence" value="ECO:0007669"/>
    <property type="project" value="Ensembl"/>
</dbReference>
<dbReference type="GO" id="GO:0005525">
    <property type="term" value="F:GTP binding"/>
    <property type="evidence" value="ECO:0000314"/>
    <property type="project" value="MGI"/>
</dbReference>
<dbReference type="GO" id="GO:0160185">
    <property type="term" value="F:phospholipase C activator activity"/>
    <property type="evidence" value="ECO:0007669"/>
    <property type="project" value="Ensembl"/>
</dbReference>
<dbReference type="GO" id="GO:0043495">
    <property type="term" value="F:protein-membrane adaptor activity"/>
    <property type="evidence" value="ECO:0000314"/>
    <property type="project" value="MGI"/>
</dbReference>
<dbReference type="GO" id="GO:0060612">
    <property type="term" value="P:adipose tissue development"/>
    <property type="evidence" value="ECO:0000315"/>
    <property type="project" value="MGI"/>
</dbReference>
<dbReference type="GO" id="GO:0071480">
    <property type="term" value="P:cellular response to gamma radiation"/>
    <property type="evidence" value="ECO:0007669"/>
    <property type="project" value="Ensembl"/>
</dbReference>
<dbReference type="GO" id="GO:0090398">
    <property type="term" value="P:cellular senescence"/>
    <property type="evidence" value="ECO:0000314"/>
    <property type="project" value="MGI"/>
</dbReference>
<dbReference type="GO" id="GO:0042832">
    <property type="term" value="P:defense response to protozoan"/>
    <property type="evidence" value="ECO:0000315"/>
    <property type="project" value="MGI"/>
</dbReference>
<dbReference type="GO" id="GO:0006897">
    <property type="term" value="P:endocytosis"/>
    <property type="evidence" value="ECO:0000314"/>
    <property type="project" value="MGI"/>
</dbReference>
<dbReference type="GO" id="GO:0038133">
    <property type="term" value="P:ERBB2-ERBB3 signaling pathway"/>
    <property type="evidence" value="ECO:0000266"/>
    <property type="project" value="MGI"/>
</dbReference>
<dbReference type="GO" id="GO:0048144">
    <property type="term" value="P:fibroblast proliferation"/>
    <property type="evidence" value="ECO:0000314"/>
    <property type="project" value="MGI"/>
</dbReference>
<dbReference type="GO" id="GO:0008286">
    <property type="term" value="P:insulin receptor signaling pathway"/>
    <property type="evidence" value="ECO:0000314"/>
    <property type="project" value="MGI"/>
</dbReference>
<dbReference type="GO" id="GO:0048009">
    <property type="term" value="P:insulin-like growth factor receptor signaling pathway"/>
    <property type="evidence" value="ECO:0000266"/>
    <property type="project" value="MGI"/>
</dbReference>
<dbReference type="GO" id="GO:0097193">
    <property type="term" value="P:intrinsic apoptotic signaling pathway"/>
    <property type="evidence" value="ECO:0000315"/>
    <property type="project" value="MGI"/>
</dbReference>
<dbReference type="GO" id="GO:0042552">
    <property type="term" value="P:myelination"/>
    <property type="evidence" value="ECO:0000315"/>
    <property type="project" value="MGI"/>
</dbReference>
<dbReference type="GO" id="GO:0008285">
    <property type="term" value="P:negative regulation of cell population proliferation"/>
    <property type="evidence" value="ECO:0007669"/>
    <property type="project" value="Ensembl"/>
</dbReference>
<dbReference type="GO" id="GO:0010629">
    <property type="term" value="P:negative regulation of gene expression"/>
    <property type="evidence" value="ECO:0007669"/>
    <property type="project" value="Ensembl"/>
</dbReference>
<dbReference type="GO" id="GO:0043524">
    <property type="term" value="P:negative regulation of neuron apoptotic process"/>
    <property type="evidence" value="ECO:0000314"/>
    <property type="project" value="MGI"/>
</dbReference>
<dbReference type="GO" id="GO:0051402">
    <property type="term" value="P:neuron apoptotic process"/>
    <property type="evidence" value="ECO:0000314"/>
    <property type="project" value="MGI"/>
</dbReference>
<dbReference type="GO" id="GO:0090402">
    <property type="term" value="P:oncogene-induced cell senescence"/>
    <property type="evidence" value="ECO:0000314"/>
    <property type="project" value="MGI"/>
</dbReference>
<dbReference type="GO" id="GO:0030335">
    <property type="term" value="P:positive regulation of cell migration"/>
    <property type="evidence" value="ECO:0007669"/>
    <property type="project" value="Ensembl"/>
</dbReference>
<dbReference type="GO" id="GO:0008284">
    <property type="term" value="P:positive regulation of cell population proliferation"/>
    <property type="evidence" value="ECO:0000353"/>
    <property type="project" value="MGI"/>
</dbReference>
<dbReference type="GO" id="GO:0050679">
    <property type="term" value="P:positive regulation of epithelial cell proliferation"/>
    <property type="evidence" value="ECO:0007669"/>
    <property type="project" value="Ensembl"/>
</dbReference>
<dbReference type="GO" id="GO:0070374">
    <property type="term" value="P:positive regulation of ERK1 and ERK2 cascade"/>
    <property type="evidence" value="ECO:0007669"/>
    <property type="project" value="Ensembl"/>
</dbReference>
<dbReference type="GO" id="GO:0048146">
    <property type="term" value="P:positive regulation of fibroblast proliferation"/>
    <property type="evidence" value="ECO:0000314"/>
    <property type="project" value="MGI"/>
</dbReference>
<dbReference type="GO" id="GO:0010628">
    <property type="term" value="P:positive regulation of gene expression"/>
    <property type="evidence" value="ECO:0000314"/>
    <property type="project" value="MGI"/>
</dbReference>
<dbReference type="GO" id="GO:0046330">
    <property type="term" value="P:positive regulation of JNK cascade"/>
    <property type="evidence" value="ECO:0007669"/>
    <property type="project" value="Ensembl"/>
</dbReference>
<dbReference type="GO" id="GO:2000630">
    <property type="term" value="P:positive regulation of miRNA metabolic process"/>
    <property type="evidence" value="ECO:0007669"/>
    <property type="project" value="Ensembl"/>
</dbReference>
<dbReference type="GO" id="GO:0090314">
    <property type="term" value="P:positive regulation of protein targeting to membrane"/>
    <property type="evidence" value="ECO:0007669"/>
    <property type="project" value="Ensembl"/>
</dbReference>
<dbReference type="GO" id="GO:0046579">
    <property type="term" value="P:positive regulation of Ras protein signal transduction"/>
    <property type="evidence" value="ECO:0000266"/>
    <property type="project" value="MGI"/>
</dbReference>
<dbReference type="GO" id="GO:1900029">
    <property type="term" value="P:positive regulation of ruffle assembly"/>
    <property type="evidence" value="ECO:0007669"/>
    <property type="project" value="Ensembl"/>
</dbReference>
<dbReference type="GO" id="GO:0045944">
    <property type="term" value="P:positive regulation of transcription by RNA polymerase II"/>
    <property type="evidence" value="ECO:0007669"/>
    <property type="project" value="Ensembl"/>
</dbReference>
<dbReference type="GO" id="GO:0032729">
    <property type="term" value="P:positive regulation of type II interferon production"/>
    <property type="evidence" value="ECO:0000315"/>
    <property type="project" value="MGI"/>
</dbReference>
<dbReference type="GO" id="GO:0090303">
    <property type="term" value="P:positive regulation of wound healing"/>
    <property type="evidence" value="ECO:0007669"/>
    <property type="project" value="Ensembl"/>
</dbReference>
<dbReference type="GO" id="GO:0007265">
    <property type="term" value="P:Ras protein signal transduction"/>
    <property type="evidence" value="ECO:0000316"/>
    <property type="project" value="ParkinsonsUK-UCL"/>
</dbReference>
<dbReference type="GO" id="GO:0032956">
    <property type="term" value="P:regulation of actin cytoskeleton organization"/>
    <property type="evidence" value="ECO:0007669"/>
    <property type="project" value="Ensembl"/>
</dbReference>
<dbReference type="GO" id="GO:0051726">
    <property type="term" value="P:regulation of cell cycle"/>
    <property type="evidence" value="ECO:0007669"/>
    <property type="project" value="Ensembl"/>
</dbReference>
<dbReference type="GO" id="GO:0042127">
    <property type="term" value="P:regulation of cell population proliferation"/>
    <property type="evidence" value="ECO:0000266"/>
    <property type="project" value="ComplexPortal"/>
</dbReference>
<dbReference type="GO" id="GO:0048169">
    <property type="term" value="P:regulation of long-term neuronal synaptic plasticity"/>
    <property type="evidence" value="ECO:0000315"/>
    <property type="project" value="MGI"/>
</dbReference>
<dbReference type="GO" id="GO:0098696">
    <property type="term" value="P:regulation of neurotransmitter receptor localization to postsynaptic specialization membrane"/>
    <property type="evidence" value="ECO:0007669"/>
    <property type="project" value="Ensembl"/>
</dbReference>
<dbReference type="GO" id="GO:0006357">
    <property type="term" value="P:regulation of transcription by RNA polymerase II"/>
    <property type="evidence" value="ECO:0000266"/>
    <property type="project" value="ComplexPortal"/>
</dbReference>
<dbReference type="GO" id="GO:0014044">
    <property type="term" value="P:Schwann cell development"/>
    <property type="evidence" value="ECO:0000315"/>
    <property type="project" value="MGI"/>
</dbReference>
<dbReference type="GO" id="GO:0007264">
    <property type="term" value="P:small GTPase-mediated signal transduction"/>
    <property type="evidence" value="ECO:0000314"/>
    <property type="project" value="MGI"/>
</dbReference>
<dbReference type="GO" id="GO:0050852">
    <property type="term" value="P:T cell receptor signaling pathway"/>
    <property type="evidence" value="ECO:0000315"/>
    <property type="project" value="MGI"/>
</dbReference>
<dbReference type="GO" id="GO:0042088">
    <property type="term" value="P:T-helper 1 type immune response"/>
    <property type="evidence" value="ECO:0000315"/>
    <property type="project" value="MGI"/>
</dbReference>
<dbReference type="CDD" id="cd04138">
    <property type="entry name" value="H_N_K_Ras_like"/>
    <property type="match status" value="1"/>
</dbReference>
<dbReference type="FunFam" id="3.40.50.300:FF:000096">
    <property type="entry name" value="KRAS proto-oncogene, GTPase"/>
    <property type="match status" value="1"/>
</dbReference>
<dbReference type="Gene3D" id="3.40.50.300">
    <property type="entry name" value="P-loop containing nucleotide triphosphate hydrolases"/>
    <property type="match status" value="1"/>
</dbReference>
<dbReference type="InterPro" id="IPR027417">
    <property type="entry name" value="P-loop_NTPase"/>
</dbReference>
<dbReference type="InterPro" id="IPR005225">
    <property type="entry name" value="Small_GTP-bd"/>
</dbReference>
<dbReference type="InterPro" id="IPR001806">
    <property type="entry name" value="Small_GTPase"/>
</dbReference>
<dbReference type="InterPro" id="IPR020849">
    <property type="entry name" value="Small_GTPase_Ras-type"/>
</dbReference>
<dbReference type="NCBIfam" id="TIGR00231">
    <property type="entry name" value="small_GTP"/>
    <property type="match status" value="1"/>
</dbReference>
<dbReference type="PANTHER" id="PTHR24070">
    <property type="entry name" value="RAS, DI-RAS, AND RHEB FAMILY MEMBERS OF SMALL GTPASE SUPERFAMILY"/>
    <property type="match status" value="1"/>
</dbReference>
<dbReference type="Pfam" id="PF00071">
    <property type="entry name" value="Ras"/>
    <property type="match status" value="1"/>
</dbReference>
<dbReference type="PRINTS" id="PR00449">
    <property type="entry name" value="RASTRNSFRMNG"/>
</dbReference>
<dbReference type="SMART" id="SM00175">
    <property type="entry name" value="RAB"/>
    <property type="match status" value="1"/>
</dbReference>
<dbReference type="SMART" id="SM00173">
    <property type="entry name" value="RAS"/>
    <property type="match status" value="1"/>
</dbReference>
<dbReference type="SMART" id="SM00174">
    <property type="entry name" value="RHO"/>
    <property type="match status" value="1"/>
</dbReference>
<dbReference type="SUPFAM" id="SSF52540">
    <property type="entry name" value="P-loop containing nucleoside triphosphate hydrolases"/>
    <property type="match status" value="1"/>
</dbReference>
<dbReference type="PROSITE" id="PS51421">
    <property type="entry name" value="RAS"/>
    <property type="match status" value="1"/>
</dbReference>
<organism>
    <name type="scientific">Mus musculus</name>
    <name type="common">Mouse</name>
    <dbReference type="NCBI Taxonomy" id="10090"/>
    <lineage>
        <taxon>Eukaryota</taxon>
        <taxon>Metazoa</taxon>
        <taxon>Chordata</taxon>
        <taxon>Craniata</taxon>
        <taxon>Vertebrata</taxon>
        <taxon>Euteleostomi</taxon>
        <taxon>Mammalia</taxon>
        <taxon>Eutheria</taxon>
        <taxon>Euarchontoglires</taxon>
        <taxon>Glires</taxon>
        <taxon>Rodentia</taxon>
        <taxon>Myomorpha</taxon>
        <taxon>Muroidea</taxon>
        <taxon>Muridae</taxon>
        <taxon>Murinae</taxon>
        <taxon>Mus</taxon>
        <taxon>Mus</taxon>
    </lineage>
</organism>
<keyword id="KW-0002">3D-structure</keyword>
<keyword id="KW-0007">Acetylation</keyword>
<keyword id="KW-0025">Alternative splicing</keyword>
<keyword id="KW-1003">Cell membrane</keyword>
<keyword id="KW-0903">Direct protein sequencing</keyword>
<keyword id="KW-0333">Golgi apparatus</keyword>
<keyword id="KW-0342">GTP-binding</keyword>
<keyword id="KW-0378">Hydrolase</keyword>
<keyword id="KW-1017">Isopeptide bond</keyword>
<keyword id="KW-0449">Lipoprotein</keyword>
<keyword id="KW-0472">Membrane</keyword>
<keyword id="KW-0488">Methylation</keyword>
<keyword id="KW-0547">Nucleotide-binding</keyword>
<keyword id="KW-0564">Palmitate</keyword>
<keyword id="KW-0636">Prenylation</keyword>
<keyword id="KW-0656">Proto-oncogene</keyword>
<keyword id="KW-1185">Reference proteome</keyword>
<keyword id="KW-0702">S-nitrosylation</keyword>
<keyword id="KW-0832">Ubl conjugation</keyword>
<feature type="chain" id="PRO_0000326478" description="GTPase HRas">
    <location>
        <begin position="1"/>
        <end position="186"/>
    </location>
</feature>
<feature type="initiator methionine" description="Removed; alternate" evidence="2">
    <location>
        <position position="1"/>
    </location>
</feature>
<feature type="chain" id="PRO_0000042998" description="GTPase HRas, N-terminally processed">
    <location>
        <begin position="2"/>
        <end position="186"/>
    </location>
</feature>
<feature type="propeptide" id="PRO_0000042999" description="Removed in mature form" evidence="1">
    <location>
        <begin position="187"/>
        <end position="189"/>
    </location>
</feature>
<feature type="region of interest" description="Hypervariable region">
    <location>
        <begin position="166"/>
        <end position="185"/>
    </location>
</feature>
<feature type="short sequence motif" description="Effector region">
    <location>
        <begin position="32"/>
        <end position="40"/>
    </location>
</feature>
<feature type="binding site" evidence="1">
    <location>
        <begin position="10"/>
        <end position="17"/>
    </location>
    <ligand>
        <name>GTP</name>
        <dbReference type="ChEBI" id="CHEBI:37565"/>
    </ligand>
</feature>
<feature type="binding site" evidence="1">
    <location>
        <begin position="57"/>
        <end position="61"/>
    </location>
    <ligand>
        <name>GTP</name>
        <dbReference type="ChEBI" id="CHEBI:37565"/>
    </ligand>
</feature>
<feature type="binding site" evidence="1">
    <location>
        <begin position="116"/>
        <end position="119"/>
    </location>
    <ligand>
        <name>GTP</name>
        <dbReference type="ChEBI" id="CHEBI:37565"/>
    </ligand>
</feature>
<feature type="modified residue" description="N-acetylmethionine" evidence="2">
    <location>
        <position position="1"/>
    </location>
</feature>
<feature type="modified residue" description="N-acetylthreonine; in GTPase HRas, N-terminally processed" evidence="2">
    <location>
        <position position="2"/>
    </location>
</feature>
<feature type="modified residue" description="S-nitrosocysteine" evidence="2">
    <location>
        <position position="118"/>
    </location>
</feature>
<feature type="modified residue" description="Cysteine methyl ester" evidence="2">
    <location>
        <position position="186"/>
    </location>
</feature>
<feature type="lipid moiety-binding region" description="S-palmitoyl cysteine" evidence="2">
    <location>
        <position position="181"/>
    </location>
</feature>
<feature type="lipid moiety-binding region" description="S-(15-deoxy-Delta12,14-prostaglandin J2-9-yl)cysteine; alternate" evidence="2">
    <location>
        <position position="184"/>
    </location>
</feature>
<feature type="lipid moiety-binding region" description="S-palmitoyl cysteine; alternate" evidence="2">
    <location>
        <position position="184"/>
    </location>
</feature>
<feature type="lipid moiety-binding region" description="S-farnesyl cysteine" evidence="2">
    <location>
        <position position="186"/>
    </location>
</feature>
<feature type="cross-link" description="Glycyl lysine isopeptide (Lys-Gly) (interchain with G-Cter in ubiquitin)" evidence="2">
    <location>
        <position position="170"/>
    </location>
</feature>
<feature type="splice variant" id="VSP_041598" description="In isoform 2." evidence="9">
    <original>VEDAFYTLVREIRQHKLRKLNPPDESGPGCMSCKCVLS</original>
    <variation>SRSGSSSGTLWDPPSPGTHVTQRPSSWRGGCLLYTSP</variation>
    <location>
        <begin position="152"/>
        <end position="189"/>
    </location>
</feature>
<feature type="mutagenesis site" description="Found in chemically induced liver tumors." evidence="8">
    <original>Q</original>
    <variation>R</variation>
    <location>
        <position position="61"/>
    </location>
</feature>
<feature type="sequence conflict" description="In Ref. 1; CAA90306." evidence="10" ref="1">
    <original>I</original>
    <variation>Y</variation>
    <location>
        <position position="55"/>
    </location>
</feature>
<feature type="strand" evidence="11">
    <location>
        <begin position="2"/>
        <end position="10"/>
    </location>
</feature>
<feature type="helix" evidence="11">
    <location>
        <begin position="16"/>
        <end position="25"/>
    </location>
</feature>
<feature type="strand" evidence="11">
    <location>
        <begin position="36"/>
        <end position="46"/>
    </location>
</feature>
<feature type="strand" evidence="11">
    <location>
        <begin position="49"/>
        <end position="58"/>
    </location>
</feature>
<feature type="helix" evidence="11">
    <location>
        <begin position="62"/>
        <end position="67"/>
    </location>
</feature>
<feature type="helix" evidence="11">
    <location>
        <begin position="68"/>
        <end position="74"/>
    </location>
</feature>
<feature type="strand" evidence="11">
    <location>
        <begin position="76"/>
        <end position="85"/>
    </location>
</feature>
<feature type="helix" evidence="11">
    <location>
        <begin position="87"/>
        <end position="104"/>
    </location>
</feature>
<feature type="strand" evidence="11">
    <location>
        <begin position="111"/>
        <end position="116"/>
    </location>
</feature>
<feature type="helix" evidence="11">
    <location>
        <begin position="127"/>
        <end position="137"/>
    </location>
</feature>
<feature type="strand" evidence="11">
    <location>
        <begin position="141"/>
        <end position="143"/>
    </location>
</feature>
<feature type="turn" evidence="11">
    <location>
        <begin position="146"/>
        <end position="149"/>
    </location>
</feature>
<feature type="helix" evidence="11">
    <location>
        <begin position="152"/>
        <end position="166"/>
    </location>
</feature>
<feature type="sequence conflict" description="In Ref. 8; CAD24593." evidence="10" ref="8">
    <original>D</original>
    <variation>G</variation>
    <location sequence="Q61411-2">
        <position position="163"/>
    </location>
</feature>